<proteinExistence type="predicted"/>
<sequence>MRLMDRLMVKLDGLTKQQKLENITKALLSANNKELANIIRNVIDNNDKDKVFIVNAAINLGLSPDYMLMNCYYLLDYAIMKNDIPVIVTLIEKGANINRRKYSDCSHLHLCAQDIIMY</sequence>
<name>YR747_MIMIV</name>
<reference key="1">
    <citation type="journal article" date="2004" name="Science">
        <title>The 1.2-megabase genome sequence of Mimivirus.</title>
        <authorList>
            <person name="Raoult D."/>
            <person name="Audic S."/>
            <person name="Robert C."/>
            <person name="Abergel C."/>
            <person name="Renesto P."/>
            <person name="Ogata H."/>
            <person name="La Scola B."/>
            <person name="Susan M."/>
            <person name="Claverie J.-M."/>
        </authorList>
    </citation>
    <scope>NUCLEOTIDE SEQUENCE [LARGE SCALE GENOMIC DNA]</scope>
    <source>
        <strain>Rowbotham-Bradford</strain>
    </source>
</reference>
<accession>Q5UP05</accession>
<dbReference type="EMBL" id="AY653733">
    <property type="protein sequence ID" value="AAV51007.1"/>
    <property type="molecule type" value="Genomic_DNA"/>
</dbReference>
<dbReference type="SMR" id="Q5UP05"/>
<dbReference type="Proteomes" id="UP000001134">
    <property type="component" value="Genome"/>
</dbReference>
<dbReference type="Gene3D" id="1.25.40.20">
    <property type="entry name" value="Ankyrin repeat-containing domain"/>
    <property type="match status" value="1"/>
</dbReference>
<dbReference type="InterPro" id="IPR036770">
    <property type="entry name" value="Ankyrin_rpt-contain_sf"/>
</dbReference>
<dbReference type="SUPFAM" id="SSF48403">
    <property type="entry name" value="Ankyrin repeat"/>
    <property type="match status" value="1"/>
</dbReference>
<dbReference type="PROSITE" id="PS50297">
    <property type="entry name" value="ANK_REP_REGION"/>
    <property type="match status" value="1"/>
</dbReference>
<protein>
    <recommendedName>
        <fullName>Putative ankyrin repeat protein R747</fullName>
    </recommendedName>
</protein>
<feature type="chain" id="PRO_0000067189" description="Putative ankyrin repeat protein R747">
    <location>
        <begin position="1"/>
        <end position="118"/>
    </location>
</feature>
<feature type="repeat" description="ANK">
    <location>
        <begin position="70"/>
        <end position="99"/>
    </location>
</feature>
<gene>
    <name type="ordered locus">MIMI_R747</name>
</gene>
<organismHost>
    <name type="scientific">Acanthamoeba polyphaga</name>
    <name type="common">Amoeba</name>
    <dbReference type="NCBI Taxonomy" id="5757"/>
</organismHost>
<keyword id="KW-0040">ANK repeat</keyword>
<keyword id="KW-1185">Reference proteome</keyword>
<organism>
    <name type="scientific">Acanthamoeba polyphaga mimivirus</name>
    <name type="common">APMV</name>
    <dbReference type="NCBI Taxonomy" id="212035"/>
    <lineage>
        <taxon>Viruses</taxon>
        <taxon>Varidnaviria</taxon>
        <taxon>Bamfordvirae</taxon>
        <taxon>Nucleocytoviricota</taxon>
        <taxon>Megaviricetes</taxon>
        <taxon>Imitervirales</taxon>
        <taxon>Mimiviridae</taxon>
        <taxon>Megamimivirinae</taxon>
        <taxon>Mimivirus</taxon>
        <taxon>Mimivirus bradfordmassiliense</taxon>
    </lineage>
</organism>